<proteinExistence type="evidence at protein level"/>
<keyword id="KW-0002">3D-structure</keyword>
<keyword id="KW-0903">Direct protein sequencing</keyword>
<keyword id="KW-0251">Elongation factor</keyword>
<keyword id="KW-0489">Methyltransferase</keyword>
<keyword id="KW-0506">mRNA capping</keyword>
<keyword id="KW-0507">mRNA processing</keyword>
<keyword id="KW-0648">Protein biosynthesis</keyword>
<keyword id="KW-1185">Reference proteome</keyword>
<keyword id="KW-0694">RNA-binding</keyword>
<keyword id="KW-0949">S-adenosyl-L-methionine</keyword>
<keyword id="KW-0804">Transcription</keyword>
<keyword id="KW-0808">Transferase</keyword>
<keyword id="KW-0946">Virion</keyword>
<organism>
    <name type="scientific">Vaccinia virus (strain Western Reserve)</name>
    <name type="common">VACV</name>
    <name type="synonym">Vaccinia virus (strain WR)</name>
    <dbReference type="NCBI Taxonomy" id="10254"/>
    <lineage>
        <taxon>Viruses</taxon>
        <taxon>Varidnaviria</taxon>
        <taxon>Bamfordvirae</taxon>
        <taxon>Nucleocytoviricota</taxon>
        <taxon>Pokkesviricetes</taxon>
        <taxon>Chitovirales</taxon>
        <taxon>Poxviridae</taxon>
        <taxon>Chordopoxvirinae</taxon>
        <taxon>Orthopoxvirus</taxon>
        <taxon>Vaccinia virus</taxon>
    </lineage>
</organism>
<feature type="chain" id="PRO_0000099112" description="Cap-specific mRNA (nucleoside-2'-O-)-methyltransferase">
    <location>
        <begin position="1"/>
        <end position="333"/>
    </location>
</feature>
<feature type="region of interest" description="Binding to Rap94">
    <location>
        <begin position="169"/>
        <end position="333"/>
    </location>
</feature>
<feature type="region of interest" description="Binding to NPH-I">
    <location>
        <begin position="169"/>
        <end position="249"/>
    </location>
</feature>
<feature type="region of interest" description="Disordered" evidence="2">
    <location>
        <begin position="305"/>
        <end position="333"/>
    </location>
</feature>
<feature type="compositionally biased region" description="Low complexity" evidence="2">
    <location>
        <begin position="311"/>
        <end position="322"/>
    </location>
</feature>
<feature type="compositionally biased region" description="Basic residues" evidence="2">
    <location>
        <begin position="323"/>
        <end position="333"/>
    </location>
</feature>
<feature type="active site" description="For methyltransferase activity" evidence="12">
    <location>
        <position position="175"/>
    </location>
</feature>
<feature type="binding site">
    <location>
        <position position="22"/>
    </location>
    <ligand>
        <name>mRNA</name>
        <dbReference type="ChEBI" id="CHEBI:33699"/>
    </ligand>
    <ligandPart>
        <name>mRNA cap</name>
    </ligandPart>
</feature>
<feature type="binding site" evidence="1 8">
    <location>
        <position position="39"/>
    </location>
    <ligand>
        <name>S-adenosyl-L-methionine</name>
        <dbReference type="ChEBI" id="CHEBI:59789"/>
    </ligand>
</feature>
<feature type="binding site" evidence="1 8">
    <location>
        <position position="66"/>
    </location>
    <ligand>
        <name>S-adenosyl-L-methionine</name>
        <dbReference type="ChEBI" id="CHEBI:59789"/>
    </ligand>
</feature>
<feature type="binding site" evidence="1 8">
    <location>
        <position position="68"/>
    </location>
    <ligand>
        <name>S-adenosyl-L-methionine</name>
        <dbReference type="ChEBI" id="CHEBI:59789"/>
    </ligand>
</feature>
<feature type="binding site" evidence="1 8">
    <location>
        <position position="72"/>
    </location>
    <ligand>
        <name>S-adenosyl-L-methionine</name>
        <dbReference type="ChEBI" id="CHEBI:59789"/>
    </ligand>
</feature>
<feature type="binding site" evidence="1 8">
    <location>
        <position position="95"/>
    </location>
    <ligand>
        <name>S-adenosyl-L-methionine</name>
        <dbReference type="ChEBI" id="CHEBI:59789"/>
    </ligand>
</feature>
<feature type="binding site" evidence="1 8">
    <location>
        <position position="97"/>
    </location>
    <ligand>
        <name>S-adenosyl-L-methionine</name>
        <dbReference type="ChEBI" id="CHEBI:59789"/>
    </ligand>
</feature>
<feature type="binding site" evidence="1 8">
    <location>
        <position position="116"/>
    </location>
    <ligand>
        <name>S-adenosyl-L-methionine</name>
        <dbReference type="ChEBI" id="CHEBI:59789"/>
    </ligand>
</feature>
<feature type="binding site" evidence="1 8">
    <location>
        <position position="138"/>
    </location>
    <ligand>
        <name>S-adenosyl-L-methionine</name>
        <dbReference type="ChEBI" id="CHEBI:59789"/>
    </ligand>
</feature>
<feature type="binding site">
    <location>
        <begin position="177"/>
        <end position="180"/>
    </location>
    <ligand>
        <name>mRNA</name>
        <dbReference type="ChEBI" id="CHEBI:33699"/>
    </ligand>
    <ligandPart>
        <name>mRNA cap</name>
    </ligandPart>
</feature>
<feature type="binding site">
    <location>
        <position position="182"/>
    </location>
    <ligand>
        <name>mRNA</name>
        <dbReference type="ChEBI" id="CHEBI:33699"/>
    </ligand>
    <ligandPart>
        <name>mRNA cap</name>
    </ligandPart>
</feature>
<feature type="binding site">
    <location>
        <begin position="205"/>
        <end position="207"/>
    </location>
    <ligand>
        <name>mRNA</name>
        <dbReference type="ChEBI" id="CHEBI:33699"/>
    </ligand>
    <ligandPart>
        <name>mRNA cap</name>
    </ligandPart>
</feature>
<feature type="binding site">
    <location>
        <position position="233"/>
    </location>
    <ligand>
        <name>mRNA</name>
        <dbReference type="ChEBI" id="CHEBI:33699"/>
    </ligand>
    <ligandPart>
        <name>mRNA cap</name>
    </ligandPart>
</feature>
<feature type="mutagenesis site" description="Complete loss of poly(A) polymerase stimulatory activity; when associated with S-58." evidence="5">
    <original>H</original>
    <variation>R</variation>
    <location>
        <position position="56"/>
    </location>
</feature>
<feature type="mutagenesis site" description="Complete loss of poly(A) polymerase stimulatory activity; when associated with R-56." evidence="5">
    <original>I</original>
    <variation>S</variation>
    <location>
        <position position="58"/>
    </location>
</feature>
<feature type="mutagenesis site" description="Complete loss of elongation factor activity." evidence="5">
    <original>G</original>
    <variation>D</variation>
    <location>
        <position position="96"/>
    </location>
</feature>
<feature type="mutagenesis site" description="Complete loss of methyltransferase activity." evidence="5">
    <original>K</original>
    <variation>R</variation>
    <location>
        <position position="175"/>
    </location>
</feature>
<feature type="helix" evidence="14">
    <location>
        <begin position="13"/>
        <end position="15"/>
    </location>
</feature>
<feature type="helix" evidence="14">
    <location>
        <begin position="24"/>
        <end position="28"/>
    </location>
</feature>
<feature type="helix" evidence="14">
    <location>
        <begin position="37"/>
        <end position="55"/>
    </location>
</feature>
<feature type="turn" evidence="16">
    <location>
        <begin position="58"/>
        <end position="61"/>
    </location>
</feature>
<feature type="strand" evidence="14">
    <location>
        <begin position="63"/>
        <end position="68"/>
    </location>
</feature>
<feature type="helix" evidence="14">
    <location>
        <begin position="73"/>
        <end position="84"/>
    </location>
</feature>
<feature type="strand" evidence="14">
    <location>
        <begin position="90"/>
        <end position="97"/>
    </location>
</feature>
<feature type="helix" evidence="14">
    <location>
        <begin position="101"/>
        <end position="103"/>
    </location>
</feature>
<feature type="strand" evidence="14">
    <location>
        <begin position="109"/>
        <end position="113"/>
    </location>
</feature>
<feature type="helix" evidence="14">
    <location>
        <begin position="118"/>
        <end position="128"/>
    </location>
</feature>
<feature type="strand" evidence="14">
    <location>
        <begin position="133"/>
        <end position="137"/>
    </location>
</feature>
<feature type="helix" evidence="14">
    <location>
        <begin position="150"/>
        <end position="167"/>
    </location>
</feature>
<feature type="strand" evidence="14">
    <location>
        <begin position="170"/>
        <end position="176"/>
    </location>
</feature>
<feature type="helix" evidence="14">
    <location>
        <begin position="181"/>
        <end position="183"/>
    </location>
</feature>
<feature type="strand" evidence="14">
    <location>
        <begin position="188"/>
        <end position="191"/>
    </location>
</feature>
<feature type="strand" evidence="14">
    <location>
        <begin position="194"/>
        <end position="196"/>
    </location>
</feature>
<feature type="strand" evidence="14">
    <location>
        <begin position="208"/>
        <end position="213"/>
    </location>
</feature>
<feature type="strand" evidence="13">
    <location>
        <begin position="215"/>
        <end position="217"/>
    </location>
</feature>
<feature type="strand" evidence="14">
    <location>
        <begin position="221"/>
        <end position="224"/>
    </location>
</feature>
<feature type="helix" evidence="14">
    <location>
        <begin position="226"/>
        <end position="241"/>
    </location>
</feature>
<feature type="helix" evidence="14">
    <location>
        <begin position="243"/>
        <end position="245"/>
    </location>
</feature>
<feature type="strand" evidence="15">
    <location>
        <begin position="246"/>
        <end position="248"/>
    </location>
</feature>
<feature type="strand" evidence="16">
    <location>
        <begin position="253"/>
        <end position="255"/>
    </location>
</feature>
<feature type="helix" evidence="14">
    <location>
        <begin position="258"/>
        <end position="267"/>
    </location>
</feature>
<feature type="helix" evidence="14">
    <location>
        <begin position="279"/>
        <end position="294"/>
    </location>
</feature>
<sequence>MDVVSLDKPFMYFEEIDNELDYEPESANEVAKKLPYQGQLKLLLGELFFLSKLQRHGILDGATVVYIGSAPGTHIRYLRDHFYNLGVIIKWMLIDGRHHDPILNGLRDVTLVTRFVDEEYLRSIKKQLHPSKIILISDVRSKRGGNEPSTADLLSNYALQNVMISILNPVASSLKWRCPFPDQWIKDFYIPHGNKMLQPFAPSYSAEMRLLSIYTGENMRLTRVTKSDAVNYEKKMYYLNKIVRNKVVVNFDYPNQEYDYFHMYFMLRTVYCNKTFPTTKAKVLFLQQSIFRFLNIPTTSTEKVSHEPIQRKISSKNSMSKNRNSKRSVRSNK</sequence>
<organismHost>
    <name type="scientific">Bos taurus</name>
    <name type="common">Bovine</name>
    <dbReference type="NCBI Taxonomy" id="9913"/>
</organismHost>
<evidence type="ECO:0000255" key="1">
    <source>
        <dbReference type="PROSITE-ProRule" id="PRU00944"/>
    </source>
</evidence>
<evidence type="ECO:0000256" key="2">
    <source>
        <dbReference type="SAM" id="MobiDB-lite"/>
    </source>
</evidence>
<evidence type="ECO:0000269" key="3">
    <source>
    </source>
</evidence>
<evidence type="ECO:0000269" key="4">
    <source>
    </source>
</evidence>
<evidence type="ECO:0000269" key="5">
    <source>
    </source>
</evidence>
<evidence type="ECO:0000269" key="6">
    <source>
    </source>
</evidence>
<evidence type="ECO:0000269" key="7">
    <source>
    </source>
</evidence>
<evidence type="ECO:0000269" key="8">
    <source>
    </source>
</evidence>
<evidence type="ECO:0000269" key="9">
    <source>
    </source>
</evidence>
<evidence type="ECO:0000269" key="10">
    <source>
    </source>
</evidence>
<evidence type="ECO:0000305" key="11"/>
<evidence type="ECO:0000305" key="12">
    <source>
    </source>
</evidence>
<evidence type="ECO:0007829" key="13">
    <source>
        <dbReference type="PDB" id="1AV6"/>
    </source>
</evidence>
<evidence type="ECO:0007829" key="14">
    <source>
        <dbReference type="PDB" id="1V39"/>
    </source>
</evidence>
<evidence type="ECO:0007829" key="15">
    <source>
        <dbReference type="PDB" id="3ER8"/>
    </source>
</evidence>
<evidence type="ECO:0007829" key="16">
    <source>
        <dbReference type="PDB" id="3ERC"/>
    </source>
</evidence>
<accession>P07617</accession>
<protein>
    <recommendedName>
        <fullName>Cap-specific mRNA (nucleoside-2'-O-)-methyltransferase</fullName>
        <ecNumber>2.1.1.57</ecNumber>
    </recommendedName>
    <alternativeName>
        <fullName>Poly(A) polymerase regulatory subunit</fullName>
    </alternativeName>
    <alternativeName>
        <fullName>Poly(A) polymerase small subunit</fullName>
        <shortName>PAP-S</shortName>
    </alternativeName>
    <alternativeName>
        <fullName>VP39</fullName>
    </alternativeName>
</protein>
<gene>
    <name type="primary">OPG102</name>
    <name type="synonym">PAPS</name>
    <name type="ordered locus">VACWR095</name>
    <name type="ORF">J3R</name>
</gene>
<name>MCE_VACCW</name>
<comment type="function">
    <text evidence="5 6 7">Displays methyltransferase, positive regulation of the poly(A) polymerase and transcription elongation activities. Involved in the modification of both mRNA ends and in intermediate and late gene positive transcription elongation. At the mRNAs 5' end, methylates the ribose 2' OH group of the first transcribed nucleotide, thereby producing a 2'-O-methylpurine cap. At the 3' end, functions as a processivity factor which stimulates the activity of the viral poly(A) polymerase OPG063 that creates mRNA's poly(A) tail. In the presence of OPG102, OPG063 does not dissociate from the RNA allowing tail elongation to around 250 adenylates.</text>
</comment>
<comment type="catalytic activity">
    <reaction>
        <text>a 5'-end (N(7)-methyl 5'-triphosphoguanosine)-ribonucleoside in mRNA + S-adenosyl-L-methionine = a 5'-end (N(7)-methyl 5'-triphosphoguanosine)-(2'-O-methyl-ribonucleoside) in mRNA + S-adenosyl-L-homocysteine + H(+)</text>
        <dbReference type="Rhea" id="RHEA:67020"/>
        <dbReference type="Rhea" id="RHEA-COMP:17167"/>
        <dbReference type="Rhea" id="RHEA-COMP:17168"/>
        <dbReference type="ChEBI" id="CHEBI:15378"/>
        <dbReference type="ChEBI" id="CHEBI:57856"/>
        <dbReference type="ChEBI" id="CHEBI:59789"/>
        <dbReference type="ChEBI" id="CHEBI:156461"/>
        <dbReference type="ChEBI" id="CHEBI:167609"/>
        <dbReference type="EC" id="2.1.1.57"/>
    </reaction>
</comment>
<comment type="subunit">
    <text evidence="3 4 7 8 9 10">Interacts with poly(A) polymerase catalytic subunit OPG063 (PubMed:1670500). Interacts with OPG109 and OPG123; these interactions might help linking transcription to capping and polyadenylation.</text>
</comment>
<comment type="subcellular location">
    <subcellularLocation>
        <location evidence="11">Virion</location>
    </subcellularLocation>
    <text evidence="11">Localizes to the virion core.</text>
</comment>
<comment type="similarity">
    <text evidence="1">Belongs to the class I-like SAM-binding methyltransferase superfamily. Poxvirus/kinetoplastid 2'-O-MTase family.</text>
</comment>
<dbReference type="EC" id="2.1.1.57"/>
<dbReference type="EMBL" id="X01978">
    <property type="protein sequence ID" value="CAA26017.1"/>
    <property type="molecule type" value="Genomic_DNA"/>
</dbReference>
<dbReference type="EMBL" id="AY243312">
    <property type="protein sequence ID" value="AAO89374.1"/>
    <property type="molecule type" value="Genomic_DNA"/>
</dbReference>
<dbReference type="PIR" id="H23092">
    <property type="entry name" value="QQVZF9"/>
</dbReference>
<dbReference type="RefSeq" id="YP_232977.1">
    <property type="nucleotide sequence ID" value="NC_006998.1"/>
</dbReference>
<dbReference type="PDB" id="1AV6">
    <property type="method" value="X-ray"/>
    <property type="resolution" value="2.80 A"/>
    <property type="chains" value="A=3-297"/>
</dbReference>
<dbReference type="PDB" id="1B42">
    <property type="method" value="X-ray"/>
    <property type="resolution" value="2.20 A"/>
    <property type="chains" value="A=1-297"/>
</dbReference>
<dbReference type="PDB" id="1BKY">
    <property type="method" value="X-ray"/>
    <property type="resolution" value="2.00 A"/>
    <property type="chains" value="A=1-307"/>
</dbReference>
<dbReference type="PDB" id="1EAM">
    <property type="method" value="X-ray"/>
    <property type="resolution" value="2.00 A"/>
    <property type="chains" value="A=1-307"/>
</dbReference>
<dbReference type="PDB" id="1EQA">
    <property type="method" value="X-ray"/>
    <property type="resolution" value="2.20 A"/>
    <property type="chains" value="A=1-297"/>
</dbReference>
<dbReference type="PDB" id="1JSZ">
    <property type="method" value="X-ray"/>
    <property type="resolution" value="1.93 A"/>
    <property type="chains" value="A=1-307"/>
</dbReference>
<dbReference type="PDB" id="1JTE">
    <property type="method" value="X-ray"/>
    <property type="resolution" value="2.00 A"/>
    <property type="chains" value="A=1-307"/>
</dbReference>
<dbReference type="PDB" id="1JTF">
    <property type="method" value="X-ray"/>
    <property type="resolution" value="2.60 A"/>
    <property type="chains" value="A=1-307"/>
</dbReference>
<dbReference type="PDB" id="1P39">
    <property type="method" value="X-ray"/>
    <property type="resolution" value="2.00 A"/>
    <property type="chains" value="A=1-307"/>
</dbReference>
<dbReference type="PDB" id="1V39">
    <property type="method" value="X-ray"/>
    <property type="resolution" value="1.80 A"/>
    <property type="chains" value="A=1-307"/>
</dbReference>
<dbReference type="PDB" id="1VP3">
    <property type="method" value="X-ray"/>
    <property type="resolution" value="1.90 A"/>
    <property type="chains" value="A=1-333"/>
</dbReference>
<dbReference type="PDB" id="1VP9">
    <property type="method" value="X-ray"/>
    <property type="resolution" value="1.95 A"/>
    <property type="chains" value="A=1-307"/>
</dbReference>
<dbReference type="PDB" id="1VPT">
    <property type="method" value="X-ray"/>
    <property type="resolution" value="1.80 A"/>
    <property type="chains" value="A=1-333"/>
</dbReference>
<dbReference type="PDB" id="2GA9">
    <property type="method" value="X-ray"/>
    <property type="resolution" value="2.30 A"/>
    <property type="chains" value="A=1-297"/>
</dbReference>
<dbReference type="PDB" id="2GAF">
    <property type="method" value="X-ray"/>
    <property type="resolution" value="2.40 A"/>
    <property type="chains" value="A=1-297"/>
</dbReference>
<dbReference type="PDB" id="2VP3">
    <property type="method" value="X-ray"/>
    <property type="resolution" value="1.95 A"/>
    <property type="chains" value="A=1-307"/>
</dbReference>
<dbReference type="PDB" id="3ER8">
    <property type="method" value="X-ray"/>
    <property type="resolution" value="3.18 A"/>
    <property type="chains" value="A/B=1-297"/>
</dbReference>
<dbReference type="PDB" id="3ER9">
    <property type="method" value="X-ray"/>
    <property type="resolution" value="2.06 A"/>
    <property type="chains" value="A=1-297"/>
</dbReference>
<dbReference type="PDB" id="3ERC">
    <property type="method" value="X-ray"/>
    <property type="resolution" value="3.21 A"/>
    <property type="chains" value="A/B=1-297"/>
</dbReference>
<dbReference type="PDB" id="3MAG">
    <property type="method" value="X-ray"/>
    <property type="resolution" value="1.80 A"/>
    <property type="chains" value="A=1-307"/>
</dbReference>
<dbReference type="PDB" id="3MCT">
    <property type="method" value="X-ray"/>
    <property type="resolution" value="2.00 A"/>
    <property type="chains" value="A=1-297"/>
</dbReference>
<dbReference type="PDB" id="4DCG">
    <property type="method" value="X-ray"/>
    <property type="resolution" value="1.80 A"/>
    <property type="chains" value="A=1-307"/>
</dbReference>
<dbReference type="PDBsum" id="1AV6"/>
<dbReference type="PDBsum" id="1B42"/>
<dbReference type="PDBsum" id="1BKY"/>
<dbReference type="PDBsum" id="1EAM"/>
<dbReference type="PDBsum" id="1EQA"/>
<dbReference type="PDBsum" id="1JSZ"/>
<dbReference type="PDBsum" id="1JTE"/>
<dbReference type="PDBsum" id="1JTF"/>
<dbReference type="PDBsum" id="1P39"/>
<dbReference type="PDBsum" id="1V39"/>
<dbReference type="PDBsum" id="1VP3"/>
<dbReference type="PDBsum" id="1VP9"/>
<dbReference type="PDBsum" id="1VPT"/>
<dbReference type="PDBsum" id="2GA9"/>
<dbReference type="PDBsum" id="2GAF"/>
<dbReference type="PDBsum" id="2VP3"/>
<dbReference type="PDBsum" id="3ER8"/>
<dbReference type="PDBsum" id="3ER9"/>
<dbReference type="PDBsum" id="3ERC"/>
<dbReference type="PDBsum" id="3MAG"/>
<dbReference type="PDBsum" id="3MCT"/>
<dbReference type="PDBsum" id="4DCG"/>
<dbReference type="SMR" id="P07617"/>
<dbReference type="DIP" id="DIP-48310N"/>
<dbReference type="IntAct" id="P07617">
    <property type="interactions" value="1"/>
</dbReference>
<dbReference type="DrugBank" id="DB04314">
    <property type="generic name" value="1-Methylcytosine"/>
</dbReference>
<dbReference type="DrugBank" id="DB04103">
    <property type="generic name" value="3-Methylcytosine"/>
</dbReference>
<dbReference type="DrugBank" id="DB03164">
    <property type="generic name" value="6-amino-1-methyl-7H-purin-1-ium"/>
</dbReference>
<dbReference type="DrugBank" id="DB01978">
    <property type="generic name" value="7,9-Dimethylguanine"/>
</dbReference>
<dbReference type="DrugBank" id="DB03358">
    <property type="generic name" value="7-Methyl-7,8-dihydroguanosine 5'-(tetrahydrogen triphosphate)"/>
</dbReference>
<dbReference type="DrugBank" id="DB01960">
    <property type="generic name" value="7-methyl-7,8-dihydroguanosine-5'-diphosphate"/>
</dbReference>
<dbReference type="DrugBank" id="DB03493">
    <property type="generic name" value="7-Methylguanosine"/>
</dbReference>
<dbReference type="DrugBank" id="DB01752">
    <property type="generic name" value="S-adenosyl-L-homocysteine"/>
</dbReference>
<dbReference type="DNASU" id="3707551"/>
<dbReference type="GeneID" id="3707551"/>
<dbReference type="KEGG" id="vg:3707551"/>
<dbReference type="BRENDA" id="2.1.1.57">
    <property type="organism ID" value="6591"/>
</dbReference>
<dbReference type="EvolutionaryTrace" id="P07617"/>
<dbReference type="Proteomes" id="UP000000344">
    <property type="component" value="Genome"/>
</dbReference>
<dbReference type="GO" id="GO:0044423">
    <property type="term" value="C:virion component"/>
    <property type="evidence" value="ECO:0007669"/>
    <property type="project" value="UniProtKB-KW"/>
</dbReference>
<dbReference type="GO" id="GO:0004483">
    <property type="term" value="F:mRNA (nucleoside-2'-O-)-methyltransferase activity"/>
    <property type="evidence" value="ECO:0007669"/>
    <property type="project" value="UniProtKB-EC"/>
</dbReference>
<dbReference type="GO" id="GO:0003723">
    <property type="term" value="F:RNA binding"/>
    <property type="evidence" value="ECO:0007669"/>
    <property type="project" value="UniProtKB-KW"/>
</dbReference>
<dbReference type="GO" id="GO:0006370">
    <property type="term" value="P:7-methylguanosine mRNA capping"/>
    <property type="evidence" value="ECO:0007669"/>
    <property type="project" value="UniProtKB-KW"/>
</dbReference>
<dbReference type="GO" id="GO:0032259">
    <property type="term" value="P:methylation"/>
    <property type="evidence" value="ECO:0007669"/>
    <property type="project" value="UniProtKB-KW"/>
</dbReference>
<dbReference type="GO" id="GO:0031440">
    <property type="term" value="P:regulation of mRNA 3'-end processing"/>
    <property type="evidence" value="ECO:0007669"/>
    <property type="project" value="InterPro"/>
</dbReference>
<dbReference type="CDD" id="cd20756">
    <property type="entry name" value="capping_2-OMTase_Poxviridae"/>
    <property type="match status" value="1"/>
</dbReference>
<dbReference type="Gene3D" id="3.40.50.150">
    <property type="entry name" value="Vaccinia Virus protein VP39"/>
    <property type="match status" value="1"/>
</dbReference>
<dbReference type="InterPro" id="IPR000176">
    <property type="entry name" value="mRNA_MeTrfase-like"/>
</dbReference>
<dbReference type="InterPro" id="IPR025804">
    <property type="entry name" value="Pox/kineto_cap_MeTfrase"/>
</dbReference>
<dbReference type="InterPro" id="IPR030375">
    <property type="entry name" value="Poxvir_cap_MeTfrase"/>
</dbReference>
<dbReference type="InterPro" id="IPR029063">
    <property type="entry name" value="SAM-dependent_MTases_sf"/>
</dbReference>
<dbReference type="Pfam" id="PF01358">
    <property type="entry name" value="PARP_regulatory"/>
    <property type="match status" value="1"/>
</dbReference>
<dbReference type="PIRSF" id="PIRSF003726">
    <property type="entry name" value="PolA_polym_reg_poxV"/>
    <property type="match status" value="1"/>
</dbReference>
<dbReference type="SUPFAM" id="SSF53335">
    <property type="entry name" value="S-adenosyl-L-methionine-dependent methyltransferases"/>
    <property type="match status" value="1"/>
</dbReference>
<dbReference type="PROSITE" id="PS51612">
    <property type="entry name" value="SAM_MT_2O_PK"/>
    <property type="match status" value="1"/>
</dbReference>
<reference key="1">
    <citation type="journal article" date="1985" name="Nucleic Acids Res.">
        <title>Nucleotide sequence of a cluster of early and late genes in a conserved segment of the vaccinia virus genome.</title>
        <authorList>
            <person name="Plucienniczak A."/>
            <person name="Schroeder E."/>
            <person name="Zettlmeissl G."/>
            <person name="Streeck R.E."/>
        </authorList>
    </citation>
    <scope>NUCLEOTIDE SEQUENCE [GENOMIC DNA]</scope>
</reference>
<reference key="2">
    <citation type="submission" date="2003-02" db="EMBL/GenBank/DDBJ databases">
        <title>Sequencing of the coding region of Vaccinia-WR to an average 9-fold redundancy and an error rate of 0.16/10kb.</title>
        <authorList>
            <person name="Esposito J.J."/>
            <person name="Frace A.M."/>
            <person name="Sammons S.A."/>
            <person name="Olsen-Rasmussen M."/>
            <person name="Osborne J."/>
            <person name="Wohlhueter R."/>
        </authorList>
    </citation>
    <scope>NUCLEOTIDE SEQUENCE [LARGE SCALE GENOMIC DNA]</scope>
</reference>
<reference key="3">
    <citation type="journal article" date="1992" name="Proc. Natl. Acad. Sci. U.S.A.">
        <title>Cap-specific mRNA (nucleoside-O2'-)-methyltransferase and poly(A) polymerase stimulatory activities of vaccinia virus are mediated by a single protein.</title>
        <authorList>
            <person name="Schnierle B.S."/>
            <person name="Gershon P.D."/>
            <person name="Moss B."/>
        </authorList>
    </citation>
    <scope>PROTEIN SEQUENCE OF 196-205; 210-219 AND 247-256</scope>
    <scope>FUNCTION</scope>
</reference>
<reference key="4">
    <citation type="journal article" date="1991" name="Cell">
        <title>Poly(A) polymerase and a dissociable polyadenylation stimulatory factor encoded by vaccinia virus.</title>
        <authorList>
            <person name="Gershon P.D."/>
            <person name="Ahn B.-Y."/>
            <person name="Garfield M."/>
            <person name="Moss B."/>
        </authorList>
    </citation>
    <scope>FUNCTION</scope>
    <scope>INTERACTION WITH OPG063</scope>
</reference>
<reference key="5">
    <citation type="journal article" date="2001" name="Virology">
        <title>Interaction between the J3R subunit of vaccinia virus poly(A) polymerase and the H4L subunit of the viral RNA polymerase.</title>
        <authorList>
            <person name="Mohamed M.R."/>
            <person name="Latner D.R."/>
            <person name="Condit R.C."/>
            <person name="Niles E.G."/>
        </authorList>
    </citation>
    <scope>INTERACTION WITH OPG109 AND OPG123</scope>
</reference>
<reference key="6">
    <citation type="journal article" date="2002" name="Chem. Biol.">
        <title>Path of an RNA ligand around the surface of the vaccinia VP39 subunit of its cognate VP39-VP55 protein heterodimer.</title>
        <authorList>
            <person name="Oguro A."/>
            <person name="Johnson L."/>
            <person name="Gershon P.D."/>
        </authorList>
    </citation>
    <scope>RNA-BINDING</scope>
</reference>
<reference key="7">
    <citation type="journal article" date="2002" name="Virology">
        <title>The positive transcription elongation factor activity of the vaccinia virus J3 protein is independent from its (nucleoside-2'-O-) methyltransferase and poly(A) polymerase stimulatory functions.</title>
        <authorList>
            <person name="Latner D.R."/>
            <person name="Thompson J.M."/>
            <person name="Gershon P.D."/>
            <person name="Storrs C."/>
            <person name="Condit R.C."/>
        </authorList>
    </citation>
    <scope>FUNCTION</scope>
    <scope>MUTAGENESIS OF HIS-56; ILE-58; GLY-96 AND LYS-175</scope>
</reference>
<reference key="8">
    <citation type="journal article" date="2004" name="Biochemistry">
        <title>Mechanism of RNA 2'-O-methylation: evidence that the catalytic lysine acts to steer rather than deprotonate the target nucleophile.</title>
        <authorList>
            <person name="Li C."/>
            <person name="Xia Y."/>
            <person name="Gao X."/>
            <person name="Gershon P.D."/>
        </authorList>
    </citation>
    <scope>ACTIVE SITE</scope>
</reference>
<reference key="9">
    <citation type="journal article" date="1996" name="Cell">
        <title>The 1.85 A structure of vaccinia protein VP39: a bifunctional enzyme that participates in the modification of both mRNA ends.</title>
        <authorList>
            <person name="Hodel A.E."/>
            <person name="Gershon P.D."/>
            <person name="Shi X."/>
            <person name="Quiocho F.A."/>
        </authorList>
    </citation>
    <scope>X-RAY CRYSTALLOGRAPHY (1.85 ANGSTROMS) IN COMPLEX WITH S-ADENOSYL-L-METHIONINE</scope>
</reference>
<reference key="10">
    <citation type="journal article" date="1997" name="Nat. Struct. Biol.">
        <title>Specific protein recognition of an mRNA cap through its alkylated base.</title>
        <authorList>
            <person name="Hodel A.E."/>
            <person name="Gershon P.D."/>
            <person name="Shi X."/>
            <person name="Wang S.-M."/>
            <person name="Quiocho F.A."/>
        </authorList>
    </citation>
    <scope>X-RAY CRYSTALLOGRAPHY (2.0 ANGSTROMS) IN COMPLEX WITH SUBSTRATE ANALOGS</scope>
</reference>
<reference key="11">
    <citation type="journal article" date="1998" name="Mol. Cell">
        <title>Structural basis for sequence-nonspecific recognition of 5'-capped mRNA by a cap-modifying enzyme.</title>
        <authorList>
            <person name="Hodel A.E."/>
            <person name="Gershon P.D."/>
            <person name="Quiocho F.A."/>
        </authorList>
    </citation>
    <scope>X-RAY CRYSTALLOGRAPHY (2.7 ANGSTROMS) IN COMPLEX WITH S-ADENOSYLHOMOCYSTEINE AND SUBSTRATE ANALOG</scope>
</reference>
<reference key="12">
    <citation type="journal article" date="1999" name="Proc. Natl. Acad. Sci. U.S.A.">
        <title>mRNA cap recognition: dominant role of enhanced stacking interactions between methylated bases and protein aromatic side chains.</title>
        <authorList>
            <person name="Hu G."/>
            <person name="Gershon P.D."/>
            <person name="Hodel A.E."/>
            <person name="Quiocho F.A."/>
        </authorList>
    </citation>
    <scope>X-RAY CRYSTALLOGRAPHY (1.8 ANGSTROMS) OF 1-307 IN COMPLEXES WITH SUBSTRATE ANALOGS</scope>
</reference>
<reference key="13">
    <citation type="journal article" date="2002" name="Biochemistry">
        <title>The 'cap-binding slot' of an mRNA cap-binding protein: quantitative effects of aromatic side chain choice in the double-stacking sandwich with cap.</title>
        <authorList>
            <person name="Hu G."/>
            <person name="Oguro A."/>
            <person name="Li C."/>
            <person name="Gershon P.D."/>
            <person name="Quiocho F.A."/>
        </authorList>
    </citation>
    <scope>X-RAY CRYSTALLOGRAPHY (1.93 ANGSTROMS) OF 1-307 IN COMPLEX WITH SUBSTRATES</scope>
</reference>